<protein>
    <recommendedName>
        <fullName evidence="1">3-demethoxyubiquinol 3-hydroxylase</fullName>
        <shortName evidence="1">DMQ hydroxylase</shortName>
        <ecNumber evidence="1">1.14.99.60</ecNumber>
    </recommendedName>
    <alternativeName>
        <fullName evidence="1">2-nonaprenyl-3-methyl-6-methoxy-1,4-benzoquinol hydroxylase</fullName>
    </alternativeName>
</protein>
<dbReference type="EC" id="1.14.99.60" evidence="1"/>
<dbReference type="EMBL" id="AL954747">
    <property type="protein sequence ID" value="CAD85580.1"/>
    <property type="molecule type" value="Genomic_DNA"/>
</dbReference>
<dbReference type="RefSeq" id="WP_011112226.1">
    <property type="nucleotide sequence ID" value="NC_004757.1"/>
</dbReference>
<dbReference type="SMR" id="Q82U40"/>
<dbReference type="STRING" id="228410.NE1669"/>
<dbReference type="GeneID" id="87104833"/>
<dbReference type="KEGG" id="neu:NE1669"/>
<dbReference type="eggNOG" id="COG2941">
    <property type="taxonomic scope" value="Bacteria"/>
</dbReference>
<dbReference type="HOGENOM" id="CLU_088601_0_0_4"/>
<dbReference type="OrthoDB" id="5192789at2"/>
<dbReference type="PhylomeDB" id="Q82U40"/>
<dbReference type="UniPathway" id="UPA00232"/>
<dbReference type="Proteomes" id="UP000001416">
    <property type="component" value="Chromosome"/>
</dbReference>
<dbReference type="GO" id="GO:0005886">
    <property type="term" value="C:plasma membrane"/>
    <property type="evidence" value="ECO:0007669"/>
    <property type="project" value="UniProtKB-SubCell"/>
</dbReference>
<dbReference type="GO" id="GO:0008682">
    <property type="term" value="F:3-demethoxyubiquinol 3-hydroxylase activity"/>
    <property type="evidence" value="ECO:0007669"/>
    <property type="project" value="UniProtKB-EC"/>
</dbReference>
<dbReference type="GO" id="GO:0046872">
    <property type="term" value="F:metal ion binding"/>
    <property type="evidence" value="ECO:0007669"/>
    <property type="project" value="UniProtKB-KW"/>
</dbReference>
<dbReference type="GO" id="GO:0006744">
    <property type="term" value="P:ubiquinone biosynthetic process"/>
    <property type="evidence" value="ECO:0007669"/>
    <property type="project" value="UniProtKB-UniRule"/>
</dbReference>
<dbReference type="CDD" id="cd01042">
    <property type="entry name" value="DMQH"/>
    <property type="match status" value="1"/>
</dbReference>
<dbReference type="Gene3D" id="1.20.1260.10">
    <property type="match status" value="1"/>
</dbReference>
<dbReference type="HAMAP" id="MF_01658">
    <property type="entry name" value="COQ7"/>
    <property type="match status" value="1"/>
</dbReference>
<dbReference type="InterPro" id="IPR047809">
    <property type="entry name" value="COQ7_proteobact"/>
</dbReference>
<dbReference type="InterPro" id="IPR012347">
    <property type="entry name" value="Ferritin-like"/>
</dbReference>
<dbReference type="InterPro" id="IPR009078">
    <property type="entry name" value="Ferritin-like_SF"/>
</dbReference>
<dbReference type="InterPro" id="IPR011566">
    <property type="entry name" value="Ubq_synth_Coq7"/>
</dbReference>
<dbReference type="NCBIfam" id="NF033656">
    <property type="entry name" value="DMQ_monoox_COQ7"/>
    <property type="match status" value="1"/>
</dbReference>
<dbReference type="PANTHER" id="PTHR11237:SF4">
    <property type="entry name" value="5-DEMETHOXYUBIQUINONE HYDROXYLASE, MITOCHONDRIAL"/>
    <property type="match status" value="1"/>
</dbReference>
<dbReference type="PANTHER" id="PTHR11237">
    <property type="entry name" value="COENZYME Q10 BIOSYNTHESIS PROTEIN 7"/>
    <property type="match status" value="1"/>
</dbReference>
<dbReference type="Pfam" id="PF03232">
    <property type="entry name" value="COQ7"/>
    <property type="match status" value="1"/>
</dbReference>
<dbReference type="SUPFAM" id="SSF47240">
    <property type="entry name" value="Ferritin-like"/>
    <property type="match status" value="1"/>
</dbReference>
<name>COQ7_NITEU</name>
<gene>
    <name evidence="1" type="primary">coq7</name>
    <name type="ordered locus">NE1669</name>
</gene>
<accession>Q82U40</accession>
<comment type="function">
    <text evidence="1">Catalyzes the hydroxylation of 2-nonaprenyl-3-methyl-6-methoxy-1,4-benzoquinol during ubiquinone biosynthesis.</text>
</comment>
<comment type="catalytic activity">
    <reaction evidence="1">
        <text>a 5-methoxy-2-methyl-3-(all-trans-polyprenyl)benzene-1,4-diol + AH2 + O2 = a 3-demethylubiquinol + A + H2O</text>
        <dbReference type="Rhea" id="RHEA:50908"/>
        <dbReference type="Rhea" id="RHEA-COMP:10859"/>
        <dbReference type="Rhea" id="RHEA-COMP:10914"/>
        <dbReference type="ChEBI" id="CHEBI:13193"/>
        <dbReference type="ChEBI" id="CHEBI:15377"/>
        <dbReference type="ChEBI" id="CHEBI:15379"/>
        <dbReference type="ChEBI" id="CHEBI:17499"/>
        <dbReference type="ChEBI" id="CHEBI:84167"/>
        <dbReference type="ChEBI" id="CHEBI:84422"/>
        <dbReference type="EC" id="1.14.99.60"/>
    </reaction>
</comment>
<comment type="cofactor">
    <cofactor evidence="1">
        <name>Fe cation</name>
        <dbReference type="ChEBI" id="CHEBI:24875"/>
    </cofactor>
    <text evidence="1">Binds 2 iron ions per subunit.</text>
</comment>
<comment type="pathway">
    <text evidence="1">Cofactor biosynthesis; ubiquinone biosynthesis.</text>
</comment>
<comment type="subcellular location">
    <subcellularLocation>
        <location evidence="1">Cell membrane</location>
        <topology evidence="1">Peripheral membrane protein</topology>
    </subcellularLocation>
</comment>
<comment type="similarity">
    <text evidence="1">Belongs to the COQ7 family.</text>
</comment>
<sequence length="208" mass="23103">MLNIDKLIIGFDSALRTLLAPANTLRPVPGKDLPENELSEIEKRESAALMRINHVGEVCAQALYQGQALTARNDRVRQALDQAAREETEHLAWTERRIAELGGRKSFLNPLWYGGSFTLGLVAGVLGDKWNLGFLAETERQVEAHLADHLQRLPHQDVRSRAIVTQMKVDEACHATMAVSHGGGQLPAPVKVAMKFSSRIMTRTAYWV</sequence>
<evidence type="ECO:0000255" key="1">
    <source>
        <dbReference type="HAMAP-Rule" id="MF_01658"/>
    </source>
</evidence>
<proteinExistence type="inferred from homology"/>
<keyword id="KW-1003">Cell membrane</keyword>
<keyword id="KW-0408">Iron</keyword>
<keyword id="KW-0472">Membrane</keyword>
<keyword id="KW-0479">Metal-binding</keyword>
<keyword id="KW-0503">Monooxygenase</keyword>
<keyword id="KW-0560">Oxidoreductase</keyword>
<keyword id="KW-1185">Reference proteome</keyword>
<keyword id="KW-0831">Ubiquinone biosynthesis</keyword>
<reference key="1">
    <citation type="journal article" date="2003" name="J. Bacteriol.">
        <title>Complete genome sequence of the ammonia-oxidizing bacterium and obligate chemolithoautotroph Nitrosomonas europaea.</title>
        <authorList>
            <person name="Chain P."/>
            <person name="Lamerdin J.E."/>
            <person name="Larimer F.W."/>
            <person name="Regala W."/>
            <person name="Lao V."/>
            <person name="Land M.L."/>
            <person name="Hauser L."/>
            <person name="Hooper A.B."/>
            <person name="Klotz M.G."/>
            <person name="Norton J."/>
            <person name="Sayavedra-Soto L.A."/>
            <person name="Arciero D.M."/>
            <person name="Hommes N.G."/>
            <person name="Whittaker M.M."/>
            <person name="Arp D.J."/>
        </authorList>
    </citation>
    <scope>NUCLEOTIDE SEQUENCE [LARGE SCALE GENOMIC DNA]</scope>
    <source>
        <strain>ATCC 19718 / CIP 103999 / KCTC 2705 / NBRC 14298</strain>
    </source>
</reference>
<feature type="chain" id="PRO_0000338701" description="3-demethoxyubiquinol 3-hydroxylase">
    <location>
        <begin position="1"/>
        <end position="208"/>
    </location>
</feature>
<feature type="binding site" evidence="1">
    <location>
        <position position="57"/>
    </location>
    <ligand>
        <name>Fe cation</name>
        <dbReference type="ChEBI" id="CHEBI:24875"/>
        <label>1</label>
    </ligand>
</feature>
<feature type="binding site" evidence="1">
    <location>
        <position position="87"/>
    </location>
    <ligand>
        <name>Fe cation</name>
        <dbReference type="ChEBI" id="CHEBI:24875"/>
        <label>1</label>
    </ligand>
</feature>
<feature type="binding site" evidence="1">
    <location>
        <position position="87"/>
    </location>
    <ligand>
        <name>Fe cation</name>
        <dbReference type="ChEBI" id="CHEBI:24875"/>
        <label>2</label>
    </ligand>
</feature>
<feature type="binding site" evidence="1">
    <location>
        <position position="90"/>
    </location>
    <ligand>
        <name>Fe cation</name>
        <dbReference type="ChEBI" id="CHEBI:24875"/>
        <label>1</label>
    </ligand>
</feature>
<feature type="binding site" evidence="1">
    <location>
        <position position="139"/>
    </location>
    <ligand>
        <name>Fe cation</name>
        <dbReference type="ChEBI" id="CHEBI:24875"/>
        <label>2</label>
    </ligand>
</feature>
<feature type="binding site" evidence="1">
    <location>
        <position position="171"/>
    </location>
    <ligand>
        <name>Fe cation</name>
        <dbReference type="ChEBI" id="CHEBI:24875"/>
        <label>1</label>
    </ligand>
</feature>
<feature type="binding site" evidence="1">
    <location>
        <position position="171"/>
    </location>
    <ligand>
        <name>Fe cation</name>
        <dbReference type="ChEBI" id="CHEBI:24875"/>
        <label>2</label>
    </ligand>
</feature>
<feature type="binding site" evidence="1">
    <location>
        <position position="174"/>
    </location>
    <ligand>
        <name>Fe cation</name>
        <dbReference type="ChEBI" id="CHEBI:24875"/>
        <label>2</label>
    </ligand>
</feature>
<organism>
    <name type="scientific">Nitrosomonas europaea (strain ATCC 19718 / CIP 103999 / KCTC 2705 / NBRC 14298)</name>
    <dbReference type="NCBI Taxonomy" id="228410"/>
    <lineage>
        <taxon>Bacteria</taxon>
        <taxon>Pseudomonadati</taxon>
        <taxon>Pseudomonadota</taxon>
        <taxon>Betaproteobacteria</taxon>
        <taxon>Nitrosomonadales</taxon>
        <taxon>Nitrosomonadaceae</taxon>
        <taxon>Nitrosomonas</taxon>
    </lineage>
</organism>